<dbReference type="EMBL" id="CP000744">
    <property type="protein sequence ID" value="ABR84113.1"/>
    <property type="molecule type" value="Genomic_DNA"/>
</dbReference>
<dbReference type="RefSeq" id="WP_003153771.1">
    <property type="nucleotide sequence ID" value="NC_009656.1"/>
</dbReference>
<dbReference type="SMR" id="A6V1D2"/>
<dbReference type="GeneID" id="77219863"/>
<dbReference type="KEGG" id="pap:PSPA7_1483"/>
<dbReference type="HOGENOM" id="CLU_040318_1_0_6"/>
<dbReference type="Proteomes" id="UP000001582">
    <property type="component" value="Chromosome"/>
</dbReference>
<dbReference type="GO" id="GO:0022627">
    <property type="term" value="C:cytosolic small ribosomal subunit"/>
    <property type="evidence" value="ECO:0007669"/>
    <property type="project" value="TreeGrafter"/>
</dbReference>
<dbReference type="GO" id="GO:0003735">
    <property type="term" value="F:structural constituent of ribosome"/>
    <property type="evidence" value="ECO:0007669"/>
    <property type="project" value="InterPro"/>
</dbReference>
<dbReference type="GO" id="GO:0006412">
    <property type="term" value="P:translation"/>
    <property type="evidence" value="ECO:0007669"/>
    <property type="project" value="UniProtKB-UniRule"/>
</dbReference>
<dbReference type="CDD" id="cd01425">
    <property type="entry name" value="RPS2"/>
    <property type="match status" value="1"/>
</dbReference>
<dbReference type="FunFam" id="1.10.287.610:FF:000001">
    <property type="entry name" value="30S ribosomal protein S2"/>
    <property type="match status" value="1"/>
</dbReference>
<dbReference type="Gene3D" id="3.40.50.10490">
    <property type="entry name" value="Glucose-6-phosphate isomerase like protein, domain 1"/>
    <property type="match status" value="1"/>
</dbReference>
<dbReference type="Gene3D" id="1.10.287.610">
    <property type="entry name" value="Helix hairpin bin"/>
    <property type="match status" value="1"/>
</dbReference>
<dbReference type="HAMAP" id="MF_00291_B">
    <property type="entry name" value="Ribosomal_uS2_B"/>
    <property type="match status" value="1"/>
</dbReference>
<dbReference type="InterPro" id="IPR001865">
    <property type="entry name" value="Ribosomal_uS2"/>
</dbReference>
<dbReference type="InterPro" id="IPR005706">
    <property type="entry name" value="Ribosomal_uS2_bac/mit/plastid"/>
</dbReference>
<dbReference type="InterPro" id="IPR018130">
    <property type="entry name" value="Ribosomal_uS2_CS"/>
</dbReference>
<dbReference type="InterPro" id="IPR023591">
    <property type="entry name" value="Ribosomal_uS2_flav_dom_sf"/>
</dbReference>
<dbReference type="NCBIfam" id="TIGR01011">
    <property type="entry name" value="rpsB_bact"/>
    <property type="match status" value="1"/>
</dbReference>
<dbReference type="PANTHER" id="PTHR12534">
    <property type="entry name" value="30S RIBOSOMAL PROTEIN S2 PROKARYOTIC AND ORGANELLAR"/>
    <property type="match status" value="1"/>
</dbReference>
<dbReference type="PANTHER" id="PTHR12534:SF0">
    <property type="entry name" value="SMALL RIBOSOMAL SUBUNIT PROTEIN US2M"/>
    <property type="match status" value="1"/>
</dbReference>
<dbReference type="Pfam" id="PF00318">
    <property type="entry name" value="Ribosomal_S2"/>
    <property type="match status" value="1"/>
</dbReference>
<dbReference type="PRINTS" id="PR00395">
    <property type="entry name" value="RIBOSOMALS2"/>
</dbReference>
<dbReference type="SUPFAM" id="SSF52313">
    <property type="entry name" value="Ribosomal protein S2"/>
    <property type="match status" value="1"/>
</dbReference>
<dbReference type="PROSITE" id="PS00962">
    <property type="entry name" value="RIBOSOMAL_S2_1"/>
    <property type="match status" value="1"/>
</dbReference>
<dbReference type="PROSITE" id="PS00963">
    <property type="entry name" value="RIBOSOMAL_S2_2"/>
    <property type="match status" value="1"/>
</dbReference>
<reference key="1">
    <citation type="submission" date="2007-06" db="EMBL/GenBank/DDBJ databases">
        <authorList>
            <person name="Dodson R.J."/>
            <person name="Harkins D."/>
            <person name="Paulsen I.T."/>
        </authorList>
    </citation>
    <scope>NUCLEOTIDE SEQUENCE [LARGE SCALE GENOMIC DNA]</scope>
    <source>
        <strain>DSM 24068 / PA7</strain>
    </source>
</reference>
<comment type="similarity">
    <text evidence="1">Belongs to the universal ribosomal protein uS2 family.</text>
</comment>
<protein>
    <recommendedName>
        <fullName evidence="1">Small ribosomal subunit protein uS2</fullName>
    </recommendedName>
    <alternativeName>
        <fullName evidence="2">30S ribosomal protein S2</fullName>
    </alternativeName>
</protein>
<evidence type="ECO:0000255" key="1">
    <source>
        <dbReference type="HAMAP-Rule" id="MF_00291"/>
    </source>
</evidence>
<evidence type="ECO:0000305" key="2"/>
<sequence length="246" mass="27320">MSQVNMRDMLKAGVHFGHQTRYWNPKMGKFIFGARNKIHIINLEKTLPMFNEALTFVERLAAGKNKILFVGTKRSAGKIVREEAARCGMPYVDHRWLGGMLTNYKTIRQSIKRLRDLETQAQDGTFDKLTKKEALMRSRDLEKLERSLGGIKDMGGLPDALFVIDVDHERIAITEANKLGIPVIGVVDTNSSPEGVDYVIPGNDDAIRAVQLYLNSMAEAVIRGKQGAATSADEFVEEAPAESAEG</sequence>
<name>RS2_PSEP7</name>
<accession>A6V1D2</accession>
<keyword id="KW-0687">Ribonucleoprotein</keyword>
<keyword id="KW-0689">Ribosomal protein</keyword>
<proteinExistence type="inferred from homology"/>
<feature type="chain" id="PRO_1000004029" description="Small ribosomal subunit protein uS2">
    <location>
        <begin position="1"/>
        <end position="246"/>
    </location>
</feature>
<organism>
    <name type="scientific">Pseudomonas paraeruginosa (strain DSM 24068 / PA7)</name>
    <name type="common">Pseudomonas aeruginosa (strain PA7)</name>
    <dbReference type="NCBI Taxonomy" id="381754"/>
    <lineage>
        <taxon>Bacteria</taxon>
        <taxon>Pseudomonadati</taxon>
        <taxon>Pseudomonadota</taxon>
        <taxon>Gammaproteobacteria</taxon>
        <taxon>Pseudomonadales</taxon>
        <taxon>Pseudomonadaceae</taxon>
        <taxon>Pseudomonas</taxon>
        <taxon>Pseudomonas paraeruginosa</taxon>
    </lineage>
</organism>
<gene>
    <name evidence="1" type="primary">rpsB</name>
    <name type="ordered locus">PSPA7_1483</name>
</gene>